<name>TSPY9_HUMAN</name>
<reference key="1">
    <citation type="journal article" date="2003" name="Nature">
        <title>The male-specific region of the human Y chromosome is a mosaic of discrete sequence classes.</title>
        <authorList>
            <person name="Skaletsky H."/>
            <person name="Kuroda-Kawaguchi T."/>
            <person name="Minx P.J."/>
            <person name="Cordum H.S."/>
            <person name="Hillier L.W."/>
            <person name="Brown L.G."/>
            <person name="Repping S."/>
            <person name="Pyntikova T."/>
            <person name="Ali J."/>
            <person name="Bieri T."/>
            <person name="Chinwalla A."/>
            <person name="Delehaunty A."/>
            <person name="Delehaunty K."/>
            <person name="Du H."/>
            <person name="Fewell G."/>
            <person name="Fulton L."/>
            <person name="Fulton R."/>
            <person name="Graves T.A."/>
            <person name="Hou S.-F."/>
            <person name="Latrielle P."/>
            <person name="Leonard S."/>
            <person name="Mardis E."/>
            <person name="Maupin R."/>
            <person name="McPherson J."/>
            <person name="Miner T."/>
            <person name="Nash W."/>
            <person name="Nguyen C."/>
            <person name="Ozersky P."/>
            <person name="Pepin K."/>
            <person name="Rock S."/>
            <person name="Rohlfing T."/>
            <person name="Scott K."/>
            <person name="Schultz B."/>
            <person name="Strong C."/>
            <person name="Tin-Wollam A."/>
            <person name="Yang S.-P."/>
            <person name="Waterston R.H."/>
            <person name="Wilson R.K."/>
            <person name="Rozen S."/>
            <person name="Page D.C."/>
        </authorList>
    </citation>
    <scope>NUCLEOTIDE SEQUENCE [LARGE SCALE GENOMIC DNA]</scope>
</reference>
<sequence>MRPEGSLTYRVPERLRQGFCGVGRAAQALVCASAKEGTAFRMEAVQEGAAGVESEQAALGEEAVLLLDDIMAEVEVVAEVEVVAEEEGLVERREEAQRAQQAVPGPGPMTPESALEELLAVQVELEPVNAQARKAFSRQREKMERRRKPQLDRRGAVIQSVPGFWANVIANHPQMSALITDEDEDMLSYMVSLEVEEEKHPVHLCKIMLFFRSNPYFQNKVITKEYLVNITEYRASHSTPIEWYPDYEVEAYRRRHHNSSLNFFNWFSDHNFAGSNKIAEILCKDLWRNPLQYYKRMKPPEEGTETSGDSQLLS</sequence>
<feature type="chain" id="PRO_0000454708" description="Testis-specific Y-encoded protein 9">
    <location>
        <begin position="1"/>
        <end position="314"/>
    </location>
</feature>
<evidence type="ECO:0000250" key="1">
    <source>
        <dbReference type="UniProtKB" id="Q01534"/>
    </source>
</evidence>
<evidence type="ECO:0000269" key="2">
    <source>
    </source>
</evidence>
<evidence type="ECO:0000305" key="3"/>
<evidence type="ECO:0000312" key="4">
    <source>
        <dbReference type="HGNC" id="HGNC:37472"/>
    </source>
</evidence>
<organism>
    <name type="scientific">Homo sapiens</name>
    <name type="common">Human</name>
    <dbReference type="NCBI Taxonomy" id="9606"/>
    <lineage>
        <taxon>Eukaryota</taxon>
        <taxon>Metazoa</taxon>
        <taxon>Chordata</taxon>
        <taxon>Craniata</taxon>
        <taxon>Vertebrata</taxon>
        <taxon>Euteleostomi</taxon>
        <taxon>Mammalia</taxon>
        <taxon>Eutheria</taxon>
        <taxon>Euarchontoglires</taxon>
        <taxon>Primates</taxon>
        <taxon>Haplorrhini</taxon>
        <taxon>Catarrhini</taxon>
        <taxon>Hominidae</taxon>
        <taxon>Homo</taxon>
    </lineage>
</organism>
<protein>
    <recommendedName>
        <fullName evidence="3">Testis-specific Y-encoded protein 9</fullName>
    </recommendedName>
</protein>
<gene>
    <name evidence="4" type="primary">TSPY9</name>
    <name evidence="4" type="synonym">TSPY9P</name>
</gene>
<keyword id="KW-0963">Cytoplasm</keyword>
<keyword id="KW-0217">Developmental protein</keyword>
<keyword id="KW-0221">Differentiation</keyword>
<keyword id="KW-0334">Gonadal differentiation</keyword>
<keyword id="KW-0539">Nucleus</keyword>
<keyword id="KW-1185">Reference proteome</keyword>
<keyword id="KW-0744">Spermatogenesis</keyword>
<proteinExistence type="inferred from homology"/>
<comment type="function">
    <text evidence="1">May be involved in sperm differentiation and proliferation.</text>
</comment>
<comment type="subcellular location">
    <subcellularLocation>
        <location evidence="1">Cytoplasm</location>
    </subcellularLocation>
    <subcellularLocation>
        <location evidence="1">Nucleus</location>
    </subcellularLocation>
</comment>
<comment type="polymorphism">
    <text evidence="2">Maps to a tandemly repeated region on chromosome Yp11; additionally at least one copy is reported originating from Yq. The gene is thought to be present with an inter-individual variation in copy number and between 20 and 60 copies per Y chromosome are expected. 35 tandemly repeated gene copies on Yp11 originating from one individual have been reported (PubMed:12815422).</text>
</comment>
<comment type="similarity">
    <text evidence="3">Belongs to the nucleosome assembly protein (NAP) family.</text>
</comment>
<dbReference type="EMBL" id="AC006156">
    <property type="status" value="NOT_ANNOTATED_CDS"/>
    <property type="molecule type" value="Genomic_DNA"/>
</dbReference>
<dbReference type="CCDS" id="CCDS94712.1"/>
<dbReference type="RefSeq" id="NP_001382992.1">
    <property type="nucleotide sequence ID" value="NM_001396063.1"/>
</dbReference>
<dbReference type="SMR" id="A0A494C1R9"/>
<dbReference type="FunCoup" id="A0A494C1R9">
    <property type="interactions" value="51"/>
</dbReference>
<dbReference type="MassIVE" id="A0A494C1R9"/>
<dbReference type="PeptideAtlas" id="A0A494C1R9"/>
<dbReference type="Ensembl" id="ENST00000440215.5">
    <property type="protein sequence ID" value="ENSP00000499192.1"/>
    <property type="gene ID" value="ENSG00000238074.6"/>
</dbReference>
<dbReference type="GeneID" id="728132"/>
<dbReference type="MANE-Select" id="ENST00000440215.5">
    <property type="protein sequence ID" value="ENSP00000499192.1"/>
    <property type="RefSeq nucleotide sequence ID" value="NM_001396063.1"/>
    <property type="RefSeq protein sequence ID" value="NP_001382992.1"/>
</dbReference>
<dbReference type="AGR" id="HGNC:37472"/>
<dbReference type="GeneCards" id="TSPY9"/>
<dbReference type="HGNC" id="HGNC:37472">
    <property type="gene designation" value="TSPY9"/>
</dbReference>
<dbReference type="HPA" id="ENSG00000238074">
    <property type="expression patterns" value="Tissue enriched (testis)"/>
</dbReference>
<dbReference type="VEuPathDB" id="HostDB:ENSG00000238074"/>
<dbReference type="GeneTree" id="ENSGT00940000162417"/>
<dbReference type="InParanoid" id="A0A494C1R9"/>
<dbReference type="OMA" id="DHEVEAY"/>
<dbReference type="PRO" id="PR:A0A494C1R9"/>
<dbReference type="Proteomes" id="UP000005640">
    <property type="component" value="Chromosome Y"/>
</dbReference>
<dbReference type="Bgee" id="ENSG00000238074">
    <property type="expression patterns" value="Expressed in male germ line stem cell (sensu Vertebrata) in testis and 11 other cell types or tissues"/>
</dbReference>
<dbReference type="GO" id="GO:0000785">
    <property type="term" value="C:chromatin"/>
    <property type="evidence" value="ECO:0000318"/>
    <property type="project" value="GO_Central"/>
</dbReference>
<dbReference type="GO" id="GO:0005737">
    <property type="term" value="C:cytoplasm"/>
    <property type="evidence" value="ECO:0007669"/>
    <property type="project" value="UniProtKB-SubCell"/>
</dbReference>
<dbReference type="GO" id="GO:0005634">
    <property type="term" value="C:nucleus"/>
    <property type="evidence" value="ECO:0000318"/>
    <property type="project" value="GO_Central"/>
</dbReference>
<dbReference type="GO" id="GO:0003682">
    <property type="term" value="F:chromatin binding"/>
    <property type="evidence" value="ECO:0000318"/>
    <property type="project" value="GO_Central"/>
</dbReference>
<dbReference type="GO" id="GO:0042393">
    <property type="term" value="F:histone binding"/>
    <property type="evidence" value="ECO:0000318"/>
    <property type="project" value="GO_Central"/>
</dbReference>
<dbReference type="GO" id="GO:0030154">
    <property type="term" value="P:cell differentiation"/>
    <property type="evidence" value="ECO:0007669"/>
    <property type="project" value="UniProtKB-KW"/>
</dbReference>
<dbReference type="GO" id="GO:0007506">
    <property type="term" value="P:gonadal mesoderm development"/>
    <property type="evidence" value="ECO:0007669"/>
    <property type="project" value="UniProtKB-KW"/>
</dbReference>
<dbReference type="GO" id="GO:0006334">
    <property type="term" value="P:nucleosome assembly"/>
    <property type="evidence" value="ECO:0007669"/>
    <property type="project" value="InterPro"/>
</dbReference>
<dbReference type="GO" id="GO:0007283">
    <property type="term" value="P:spermatogenesis"/>
    <property type="evidence" value="ECO:0007669"/>
    <property type="project" value="UniProtKB-KW"/>
</dbReference>
<dbReference type="FunFam" id="3.30.1120.90:FF:000002">
    <property type="entry name" value="Testis-specific Y-encoded-like protein 2"/>
    <property type="match status" value="1"/>
</dbReference>
<dbReference type="Gene3D" id="1.20.5.1500">
    <property type="match status" value="1"/>
</dbReference>
<dbReference type="Gene3D" id="3.30.1120.90">
    <property type="entry name" value="Nucleosome assembly protein"/>
    <property type="match status" value="1"/>
</dbReference>
<dbReference type="InterPro" id="IPR037231">
    <property type="entry name" value="NAP-like_sf"/>
</dbReference>
<dbReference type="InterPro" id="IPR002164">
    <property type="entry name" value="NAP_family"/>
</dbReference>
<dbReference type="PANTHER" id="PTHR11875">
    <property type="entry name" value="TESTIS-SPECIFIC Y-ENCODED PROTEIN"/>
    <property type="match status" value="1"/>
</dbReference>
<dbReference type="Pfam" id="PF00956">
    <property type="entry name" value="NAP"/>
    <property type="match status" value="1"/>
</dbReference>
<dbReference type="SUPFAM" id="SSF143113">
    <property type="entry name" value="NAP-like"/>
    <property type="match status" value="1"/>
</dbReference>
<accession>A0A494C1R9</accession>